<gene>
    <name evidence="1" type="primary">rplY</name>
    <name evidence="1" type="synonym">ctc</name>
    <name type="ordered locus">Athe_1247</name>
</gene>
<organism>
    <name type="scientific">Caldicellulosiruptor bescii (strain ATCC BAA-1888 / DSM 6725 / KCTC 15123 / Z-1320)</name>
    <name type="common">Anaerocellum thermophilum</name>
    <dbReference type="NCBI Taxonomy" id="521460"/>
    <lineage>
        <taxon>Bacteria</taxon>
        <taxon>Bacillati</taxon>
        <taxon>Bacillota</taxon>
        <taxon>Bacillota incertae sedis</taxon>
        <taxon>Caldicellulosiruptorales</taxon>
        <taxon>Caldicellulosiruptoraceae</taxon>
        <taxon>Caldicellulosiruptor</taxon>
    </lineage>
</organism>
<keyword id="KW-0687">Ribonucleoprotein</keyword>
<keyword id="KW-0689">Ribosomal protein</keyword>
<keyword id="KW-0694">RNA-binding</keyword>
<keyword id="KW-0699">rRNA-binding</keyword>
<accession>B9MRP3</accession>
<feature type="chain" id="PRO_1000166162" description="Large ribosomal subunit protein bL25">
    <location>
        <begin position="1"/>
        <end position="200"/>
    </location>
</feature>
<name>RL25_CALBD</name>
<dbReference type="EMBL" id="CP001393">
    <property type="protein sequence ID" value="ACM60347.1"/>
    <property type="molecule type" value="Genomic_DNA"/>
</dbReference>
<dbReference type="RefSeq" id="WP_015907737.1">
    <property type="nucleotide sequence ID" value="NC_012034.1"/>
</dbReference>
<dbReference type="SMR" id="B9MRP3"/>
<dbReference type="STRING" id="521460.Athe_1247"/>
<dbReference type="GeneID" id="31772595"/>
<dbReference type="KEGG" id="ate:Athe_1247"/>
<dbReference type="eggNOG" id="COG1825">
    <property type="taxonomic scope" value="Bacteria"/>
</dbReference>
<dbReference type="HOGENOM" id="CLU_075939_2_1_9"/>
<dbReference type="Proteomes" id="UP000007723">
    <property type="component" value="Chromosome"/>
</dbReference>
<dbReference type="GO" id="GO:0022625">
    <property type="term" value="C:cytosolic large ribosomal subunit"/>
    <property type="evidence" value="ECO:0007669"/>
    <property type="project" value="TreeGrafter"/>
</dbReference>
<dbReference type="GO" id="GO:0008097">
    <property type="term" value="F:5S rRNA binding"/>
    <property type="evidence" value="ECO:0007669"/>
    <property type="project" value="InterPro"/>
</dbReference>
<dbReference type="GO" id="GO:0003735">
    <property type="term" value="F:structural constituent of ribosome"/>
    <property type="evidence" value="ECO:0007669"/>
    <property type="project" value="InterPro"/>
</dbReference>
<dbReference type="GO" id="GO:0006412">
    <property type="term" value="P:translation"/>
    <property type="evidence" value="ECO:0007669"/>
    <property type="project" value="UniProtKB-UniRule"/>
</dbReference>
<dbReference type="CDD" id="cd00495">
    <property type="entry name" value="Ribosomal_L25_TL5_CTC"/>
    <property type="match status" value="1"/>
</dbReference>
<dbReference type="Gene3D" id="2.170.120.20">
    <property type="entry name" value="Ribosomal protein L25, beta domain"/>
    <property type="match status" value="1"/>
</dbReference>
<dbReference type="Gene3D" id="2.40.240.10">
    <property type="entry name" value="Ribosomal Protein L25, Chain P"/>
    <property type="match status" value="1"/>
</dbReference>
<dbReference type="HAMAP" id="MF_01334">
    <property type="entry name" value="Ribosomal_bL25_CTC"/>
    <property type="match status" value="1"/>
</dbReference>
<dbReference type="InterPro" id="IPR020056">
    <property type="entry name" value="Rbsml_bL25/Gln-tRNA_synth_N"/>
</dbReference>
<dbReference type="InterPro" id="IPR011035">
    <property type="entry name" value="Ribosomal_bL25/Gln-tRNA_synth"/>
</dbReference>
<dbReference type="InterPro" id="IPR020057">
    <property type="entry name" value="Ribosomal_bL25_b-dom"/>
</dbReference>
<dbReference type="InterPro" id="IPR037121">
    <property type="entry name" value="Ribosomal_bL25_C"/>
</dbReference>
<dbReference type="InterPro" id="IPR001021">
    <property type="entry name" value="Ribosomal_bL25_long"/>
</dbReference>
<dbReference type="InterPro" id="IPR029751">
    <property type="entry name" value="Ribosomal_L25_dom"/>
</dbReference>
<dbReference type="InterPro" id="IPR020930">
    <property type="entry name" value="Ribosomal_uL5_bac-type"/>
</dbReference>
<dbReference type="NCBIfam" id="TIGR00731">
    <property type="entry name" value="bL25_bact_ctc"/>
    <property type="match status" value="1"/>
</dbReference>
<dbReference type="NCBIfam" id="NF004142">
    <property type="entry name" value="PRK05618.4-5"/>
    <property type="match status" value="1"/>
</dbReference>
<dbReference type="PANTHER" id="PTHR33284">
    <property type="entry name" value="RIBOSOMAL PROTEIN L25/GLN-TRNA SYNTHETASE, ANTI-CODON-BINDING DOMAIN-CONTAINING PROTEIN"/>
    <property type="match status" value="1"/>
</dbReference>
<dbReference type="PANTHER" id="PTHR33284:SF1">
    <property type="entry name" value="RIBOSOMAL PROTEIN L25_GLN-TRNA SYNTHETASE, ANTI-CODON-BINDING DOMAIN-CONTAINING PROTEIN"/>
    <property type="match status" value="1"/>
</dbReference>
<dbReference type="Pfam" id="PF01386">
    <property type="entry name" value="Ribosomal_L25p"/>
    <property type="match status" value="1"/>
</dbReference>
<dbReference type="Pfam" id="PF14693">
    <property type="entry name" value="Ribosomal_TL5_C"/>
    <property type="match status" value="1"/>
</dbReference>
<dbReference type="SUPFAM" id="SSF50715">
    <property type="entry name" value="Ribosomal protein L25-like"/>
    <property type="match status" value="1"/>
</dbReference>
<sequence>MEPVLVYNRRDIFTKSNLNKLRKEGYIPAVAYGDDIKSLPGYVSKKEFEKLYHQKGLAGKIKISIDGKERTALIKEVQTHYTKGNIIHVDFQILSENKPIYVEVPIIFENAEILKSRGLVLQRQMDTVEIEGLPKDIPEHLVIDLMAYEKPTAIKLKDIKLPEGIKITEDLDEVVAVIDVSEITEEPEVEEKKEETSSNA</sequence>
<protein>
    <recommendedName>
        <fullName evidence="1">Large ribosomal subunit protein bL25</fullName>
    </recommendedName>
    <alternativeName>
        <fullName evidence="2">50S ribosomal protein L25</fullName>
    </alternativeName>
    <alternativeName>
        <fullName evidence="1">General stress protein CTC</fullName>
    </alternativeName>
</protein>
<evidence type="ECO:0000255" key="1">
    <source>
        <dbReference type="HAMAP-Rule" id="MF_01334"/>
    </source>
</evidence>
<evidence type="ECO:0000305" key="2"/>
<comment type="function">
    <text evidence="1">This is one of the proteins that binds to the 5S RNA in the ribosome where it forms part of the central protuberance.</text>
</comment>
<comment type="subunit">
    <text evidence="1">Part of the 50S ribosomal subunit; part of the 5S rRNA/L5/L18/L25 subcomplex. Contacts the 5S rRNA. Binds to the 5S rRNA independently of L5 and L18.</text>
</comment>
<comment type="similarity">
    <text evidence="1">Belongs to the bacterial ribosomal protein bL25 family. CTC subfamily.</text>
</comment>
<proteinExistence type="inferred from homology"/>
<reference key="1">
    <citation type="submission" date="2009-01" db="EMBL/GenBank/DDBJ databases">
        <title>Complete sequence of chromosome of Caldicellulosiruptor becscii DSM 6725.</title>
        <authorList>
            <person name="Lucas S."/>
            <person name="Copeland A."/>
            <person name="Lapidus A."/>
            <person name="Glavina del Rio T."/>
            <person name="Tice H."/>
            <person name="Bruce D."/>
            <person name="Goodwin L."/>
            <person name="Pitluck S."/>
            <person name="Sims D."/>
            <person name="Meincke L."/>
            <person name="Brettin T."/>
            <person name="Detter J.C."/>
            <person name="Han C."/>
            <person name="Larimer F."/>
            <person name="Land M."/>
            <person name="Hauser L."/>
            <person name="Kyrpides N."/>
            <person name="Ovchinnikova G."/>
            <person name="Kataeva I."/>
            <person name="Adams M.W.W."/>
        </authorList>
    </citation>
    <scope>NUCLEOTIDE SEQUENCE [LARGE SCALE GENOMIC DNA]</scope>
    <source>
        <strain>ATCC BAA-1888 / DSM 6725 / KCTC 15123 / Z-1320</strain>
    </source>
</reference>